<sequence length="368" mass="40846">MSESPKKVIVGMSGGVDSSVSAWLLQQQGYQVEGLFMKNWEEDDGEEYCTAAADLADAQAVCDKLGIELHTVNFAAEYWDNVFELFLEEYKAGRTPNPDILCNKEIKFKAFLEFAAEDLGADYIATGHYVRRVDINGKSRLLRGLDGNKDQSYFLYTLGHEQIAQSLFPVGELEKPQVRKIAEDLGLITAKKKDSTGICFIGERKFRDFLGRYLPAQPGKIITVDGDEIGEHQGLMYHTLGQRKGLGIGGTKDGSEDPWYVVDKDVENNVLIVAQGHEHPRLMSSGLIAQQLHWVDREPFTGTLSCTVKTRYRQTDIPCTINALDDDRIEVIFDEPVAAVTPGQSAVFYSGEVCLGGGIIEQRLPLTV</sequence>
<name>MNMA_SALAR</name>
<keyword id="KW-0067">ATP-binding</keyword>
<keyword id="KW-0963">Cytoplasm</keyword>
<keyword id="KW-1015">Disulfide bond</keyword>
<keyword id="KW-0547">Nucleotide-binding</keyword>
<keyword id="KW-1185">Reference proteome</keyword>
<keyword id="KW-0694">RNA-binding</keyword>
<keyword id="KW-0808">Transferase</keyword>
<keyword id="KW-0819">tRNA processing</keyword>
<keyword id="KW-0820">tRNA-binding</keyword>
<organism>
    <name type="scientific">Salmonella arizonae (strain ATCC BAA-731 / CDC346-86 / RSK2980)</name>
    <dbReference type="NCBI Taxonomy" id="41514"/>
    <lineage>
        <taxon>Bacteria</taxon>
        <taxon>Pseudomonadati</taxon>
        <taxon>Pseudomonadota</taxon>
        <taxon>Gammaproteobacteria</taxon>
        <taxon>Enterobacterales</taxon>
        <taxon>Enterobacteriaceae</taxon>
        <taxon>Salmonella</taxon>
    </lineage>
</organism>
<accession>A9MG80</accession>
<dbReference type="EC" id="2.8.1.13" evidence="1"/>
<dbReference type="EMBL" id="CP000880">
    <property type="protein sequence ID" value="ABX21642.1"/>
    <property type="status" value="ALT_INIT"/>
    <property type="molecule type" value="Genomic_DNA"/>
</dbReference>
<dbReference type="SMR" id="A9MG80"/>
<dbReference type="STRING" id="41514.SARI_01756"/>
<dbReference type="KEGG" id="ses:SARI_01756"/>
<dbReference type="HOGENOM" id="CLU_035188_1_0_6"/>
<dbReference type="Proteomes" id="UP000002084">
    <property type="component" value="Chromosome"/>
</dbReference>
<dbReference type="GO" id="GO:0005737">
    <property type="term" value="C:cytoplasm"/>
    <property type="evidence" value="ECO:0007669"/>
    <property type="project" value="UniProtKB-SubCell"/>
</dbReference>
<dbReference type="GO" id="GO:0005524">
    <property type="term" value="F:ATP binding"/>
    <property type="evidence" value="ECO:0007669"/>
    <property type="project" value="UniProtKB-KW"/>
</dbReference>
<dbReference type="GO" id="GO:0000049">
    <property type="term" value="F:tRNA binding"/>
    <property type="evidence" value="ECO:0007669"/>
    <property type="project" value="UniProtKB-KW"/>
</dbReference>
<dbReference type="GO" id="GO:0103016">
    <property type="term" value="F:tRNA-uridine 2-sulfurtransferase activity"/>
    <property type="evidence" value="ECO:0007669"/>
    <property type="project" value="UniProtKB-EC"/>
</dbReference>
<dbReference type="GO" id="GO:0002143">
    <property type="term" value="P:tRNA wobble position uridine thiolation"/>
    <property type="evidence" value="ECO:0007669"/>
    <property type="project" value="TreeGrafter"/>
</dbReference>
<dbReference type="CDD" id="cd01998">
    <property type="entry name" value="MnmA_TRMU-like"/>
    <property type="match status" value="1"/>
</dbReference>
<dbReference type="FunFam" id="2.30.30.280:FF:000001">
    <property type="entry name" value="tRNA-specific 2-thiouridylase MnmA"/>
    <property type="match status" value="1"/>
</dbReference>
<dbReference type="FunFam" id="2.40.30.10:FF:000023">
    <property type="entry name" value="tRNA-specific 2-thiouridylase MnmA"/>
    <property type="match status" value="1"/>
</dbReference>
<dbReference type="FunFam" id="3.40.50.620:FF:000004">
    <property type="entry name" value="tRNA-specific 2-thiouridylase MnmA"/>
    <property type="match status" value="1"/>
</dbReference>
<dbReference type="Gene3D" id="2.30.30.280">
    <property type="entry name" value="Adenine nucleotide alpha hydrolases-like domains"/>
    <property type="match status" value="1"/>
</dbReference>
<dbReference type="Gene3D" id="3.40.50.620">
    <property type="entry name" value="HUPs"/>
    <property type="match status" value="1"/>
</dbReference>
<dbReference type="Gene3D" id="2.40.30.10">
    <property type="entry name" value="Translation factors"/>
    <property type="match status" value="1"/>
</dbReference>
<dbReference type="HAMAP" id="MF_00144">
    <property type="entry name" value="tRNA_thiouridyl_MnmA"/>
    <property type="match status" value="1"/>
</dbReference>
<dbReference type="InterPro" id="IPR004506">
    <property type="entry name" value="MnmA-like"/>
</dbReference>
<dbReference type="InterPro" id="IPR046885">
    <property type="entry name" value="MnmA-like_C"/>
</dbReference>
<dbReference type="InterPro" id="IPR046884">
    <property type="entry name" value="MnmA-like_central"/>
</dbReference>
<dbReference type="InterPro" id="IPR023382">
    <property type="entry name" value="MnmA-like_central_sf"/>
</dbReference>
<dbReference type="InterPro" id="IPR014729">
    <property type="entry name" value="Rossmann-like_a/b/a_fold"/>
</dbReference>
<dbReference type="NCBIfam" id="NF001138">
    <property type="entry name" value="PRK00143.1"/>
    <property type="match status" value="1"/>
</dbReference>
<dbReference type="NCBIfam" id="TIGR00420">
    <property type="entry name" value="trmU"/>
    <property type="match status" value="1"/>
</dbReference>
<dbReference type="PANTHER" id="PTHR11933:SF5">
    <property type="entry name" value="MITOCHONDRIAL TRNA-SPECIFIC 2-THIOURIDYLASE 1"/>
    <property type="match status" value="1"/>
</dbReference>
<dbReference type="PANTHER" id="PTHR11933">
    <property type="entry name" value="TRNA 5-METHYLAMINOMETHYL-2-THIOURIDYLATE -METHYLTRANSFERASE"/>
    <property type="match status" value="1"/>
</dbReference>
<dbReference type="Pfam" id="PF03054">
    <property type="entry name" value="tRNA_Me_trans"/>
    <property type="match status" value="1"/>
</dbReference>
<dbReference type="Pfam" id="PF20258">
    <property type="entry name" value="tRNA_Me_trans_C"/>
    <property type="match status" value="1"/>
</dbReference>
<dbReference type="Pfam" id="PF20259">
    <property type="entry name" value="tRNA_Me_trans_M"/>
    <property type="match status" value="1"/>
</dbReference>
<dbReference type="SUPFAM" id="SSF52402">
    <property type="entry name" value="Adenine nucleotide alpha hydrolases-like"/>
    <property type="match status" value="1"/>
</dbReference>
<protein>
    <recommendedName>
        <fullName evidence="1">tRNA-specific 2-thiouridylase MnmA</fullName>
        <ecNumber evidence="1">2.8.1.13</ecNumber>
    </recommendedName>
</protein>
<evidence type="ECO:0000255" key="1">
    <source>
        <dbReference type="HAMAP-Rule" id="MF_00144"/>
    </source>
</evidence>
<evidence type="ECO:0000305" key="2"/>
<reference key="1">
    <citation type="submission" date="2007-11" db="EMBL/GenBank/DDBJ databases">
        <authorList>
            <consortium name="The Salmonella enterica serovar Arizonae Genome Sequencing Project"/>
            <person name="McClelland M."/>
            <person name="Sanderson E.K."/>
            <person name="Porwollik S."/>
            <person name="Spieth J."/>
            <person name="Clifton W.S."/>
            <person name="Fulton R."/>
            <person name="Chunyan W."/>
            <person name="Wollam A."/>
            <person name="Shah N."/>
            <person name="Pepin K."/>
            <person name="Bhonagiri V."/>
            <person name="Nash W."/>
            <person name="Johnson M."/>
            <person name="Thiruvilangam P."/>
            <person name="Wilson R."/>
        </authorList>
    </citation>
    <scope>NUCLEOTIDE SEQUENCE [LARGE SCALE GENOMIC DNA]</scope>
    <source>
        <strain>ATCC BAA-731 / CDC346-86 / RSK2980</strain>
    </source>
</reference>
<gene>
    <name evidence="1" type="primary">mnmA</name>
    <name type="ordered locus">SARI_01756</name>
</gene>
<feature type="chain" id="PRO_0000349786" description="tRNA-specific 2-thiouridylase MnmA">
    <location>
        <begin position="1"/>
        <end position="368"/>
    </location>
</feature>
<feature type="region of interest" description="Interaction with target base in tRNA" evidence="1">
    <location>
        <begin position="97"/>
        <end position="99"/>
    </location>
</feature>
<feature type="region of interest" description="Interaction with tRNA" evidence="1">
    <location>
        <begin position="149"/>
        <end position="151"/>
    </location>
</feature>
<feature type="region of interest" description="Interaction with tRNA" evidence="1">
    <location>
        <begin position="311"/>
        <end position="312"/>
    </location>
</feature>
<feature type="active site" description="Nucleophile" evidence="1">
    <location>
        <position position="102"/>
    </location>
</feature>
<feature type="active site" description="Cysteine persulfide intermediate" evidence="1">
    <location>
        <position position="199"/>
    </location>
</feature>
<feature type="binding site" evidence="1">
    <location>
        <begin position="11"/>
        <end position="18"/>
    </location>
    <ligand>
        <name>ATP</name>
        <dbReference type="ChEBI" id="CHEBI:30616"/>
    </ligand>
</feature>
<feature type="binding site" evidence="1">
    <location>
        <position position="37"/>
    </location>
    <ligand>
        <name>ATP</name>
        <dbReference type="ChEBI" id="CHEBI:30616"/>
    </ligand>
</feature>
<feature type="binding site" evidence="1">
    <location>
        <position position="127"/>
    </location>
    <ligand>
        <name>ATP</name>
        <dbReference type="ChEBI" id="CHEBI:30616"/>
    </ligand>
</feature>
<feature type="site" description="Interaction with tRNA" evidence="1">
    <location>
        <position position="128"/>
    </location>
</feature>
<feature type="site" description="Interaction with tRNA" evidence="1">
    <location>
        <position position="344"/>
    </location>
</feature>
<feature type="disulfide bond" description="Alternate" evidence="1">
    <location>
        <begin position="102"/>
        <end position="199"/>
    </location>
</feature>
<comment type="function">
    <text evidence="1">Catalyzes the 2-thiolation of uridine at the wobble position (U34) of tRNA(Lys), tRNA(Glu) and tRNA(Gln), leading to the formation of s(2)U34, the first step of tRNA-mnm(5)s(2)U34 synthesis. Sulfur is provided by IscS, via a sulfur-relay system. Binds ATP and its substrate tRNAs.</text>
</comment>
<comment type="catalytic activity">
    <reaction evidence="1">
        <text>S-sulfanyl-L-cysteinyl-[protein] + uridine(34) in tRNA + AH2 + ATP = 2-thiouridine(34) in tRNA + L-cysteinyl-[protein] + A + AMP + diphosphate + H(+)</text>
        <dbReference type="Rhea" id="RHEA:47032"/>
        <dbReference type="Rhea" id="RHEA-COMP:10131"/>
        <dbReference type="Rhea" id="RHEA-COMP:11726"/>
        <dbReference type="Rhea" id="RHEA-COMP:11727"/>
        <dbReference type="Rhea" id="RHEA-COMP:11728"/>
        <dbReference type="ChEBI" id="CHEBI:13193"/>
        <dbReference type="ChEBI" id="CHEBI:15378"/>
        <dbReference type="ChEBI" id="CHEBI:17499"/>
        <dbReference type="ChEBI" id="CHEBI:29950"/>
        <dbReference type="ChEBI" id="CHEBI:30616"/>
        <dbReference type="ChEBI" id="CHEBI:33019"/>
        <dbReference type="ChEBI" id="CHEBI:61963"/>
        <dbReference type="ChEBI" id="CHEBI:65315"/>
        <dbReference type="ChEBI" id="CHEBI:87170"/>
        <dbReference type="ChEBI" id="CHEBI:456215"/>
        <dbReference type="EC" id="2.8.1.13"/>
    </reaction>
</comment>
<comment type="subunit">
    <text evidence="1">Interacts with TusE.</text>
</comment>
<comment type="subcellular location">
    <subcellularLocation>
        <location evidence="1">Cytoplasm</location>
    </subcellularLocation>
</comment>
<comment type="similarity">
    <text evidence="1">Belongs to the MnmA/TRMU family.</text>
</comment>
<comment type="sequence caution" evidence="2">
    <conflict type="erroneous initiation">
        <sequence resource="EMBL-CDS" id="ABX21642"/>
    </conflict>
</comment>
<proteinExistence type="inferred from homology"/>